<organism>
    <name type="scientific">Silene latifolia</name>
    <name type="common">White campion</name>
    <name type="synonym">Bladder campion</name>
    <dbReference type="NCBI Taxonomy" id="37657"/>
    <lineage>
        <taxon>Eukaryota</taxon>
        <taxon>Viridiplantae</taxon>
        <taxon>Streptophyta</taxon>
        <taxon>Embryophyta</taxon>
        <taxon>Tracheophyta</taxon>
        <taxon>Spermatophyta</taxon>
        <taxon>Magnoliopsida</taxon>
        <taxon>eudicotyledons</taxon>
        <taxon>Gunneridae</taxon>
        <taxon>Pentapetalae</taxon>
        <taxon>Caryophyllales</taxon>
        <taxon>Caryophyllaceae</taxon>
        <taxon>Sileneae</taxon>
        <taxon>Silene</taxon>
        <taxon>Silene subgen. Behenantha</taxon>
        <taxon>Silene sect. Melandrium</taxon>
    </lineage>
</organism>
<geneLocation type="chloroplast"/>
<sequence length="507" mass="55629">MVTIRADEISNIIRERIEKYNREVKVVNTGTVLQVGDGIARIHGLDEVMAGELVEFEERTIGIALNLESNNVGVVLMGDGLLIQEGSSVKATGRIAQIPVSDAYLGRVINALAKPIDGRGEISTSESRLIESPAPGIISRRSVYEPLQTGLIAIDSMIPIGRGQRELIIGDRQTGKTAVATDTILNQQGQNVICVYVAIGQKASSVAQVVNMFQERGAMEYTIVVAETADSPATLQYLAPYTGAALAEYFMYRERHTLIIYDDLSKQAQAYRQMSLLLRRPPGREAYPGDVFYLHSRLLERAAKSSSFLGEGSMTALPIVETQSGDVSAYIPTNVISITDGQIFLSADLFNAGIRPAINVGISVSRVGSAAQIKAMKQVAGKLKLELAQFAELEAFAQFASDLDKATQNQLARGQRLRELLKQPQSAPLTVEEQIMTIYTGTNGYLDSLEIGQVRKFIVELRTYLKTNKSQFQEIISSTKTFTEEAEALLKEAIQEQMERFLLQEQA</sequence>
<feature type="chain" id="PRO_0000238440" description="ATP synthase subunit alpha, chloroplastic">
    <location>
        <begin position="1"/>
        <end position="507"/>
    </location>
</feature>
<feature type="binding site" evidence="1">
    <location>
        <begin position="170"/>
        <end position="177"/>
    </location>
    <ligand>
        <name>ATP</name>
        <dbReference type="ChEBI" id="CHEBI:30616"/>
    </ligand>
</feature>
<feature type="site" description="Required for activity" evidence="1">
    <location>
        <position position="363"/>
    </location>
</feature>
<dbReference type="EC" id="7.1.2.2" evidence="1"/>
<dbReference type="EMBL" id="AB189069">
    <property type="protein sequence ID" value="BAD93464.1"/>
    <property type="molecule type" value="Genomic_DNA"/>
</dbReference>
<dbReference type="RefSeq" id="YP_005089562.1">
    <property type="nucleotide sequence ID" value="NC_016730.1"/>
</dbReference>
<dbReference type="SMR" id="Q589B3"/>
<dbReference type="GeneID" id="11541043"/>
<dbReference type="GO" id="GO:0009535">
    <property type="term" value="C:chloroplast thylakoid membrane"/>
    <property type="evidence" value="ECO:0007669"/>
    <property type="project" value="UniProtKB-SubCell"/>
</dbReference>
<dbReference type="GO" id="GO:0045259">
    <property type="term" value="C:proton-transporting ATP synthase complex"/>
    <property type="evidence" value="ECO:0007669"/>
    <property type="project" value="UniProtKB-KW"/>
</dbReference>
<dbReference type="GO" id="GO:0043531">
    <property type="term" value="F:ADP binding"/>
    <property type="evidence" value="ECO:0007669"/>
    <property type="project" value="TreeGrafter"/>
</dbReference>
<dbReference type="GO" id="GO:0005524">
    <property type="term" value="F:ATP binding"/>
    <property type="evidence" value="ECO:0007669"/>
    <property type="project" value="UniProtKB-UniRule"/>
</dbReference>
<dbReference type="GO" id="GO:0046933">
    <property type="term" value="F:proton-transporting ATP synthase activity, rotational mechanism"/>
    <property type="evidence" value="ECO:0007669"/>
    <property type="project" value="UniProtKB-UniRule"/>
</dbReference>
<dbReference type="CDD" id="cd18113">
    <property type="entry name" value="ATP-synt_F1_alpha_C"/>
    <property type="match status" value="1"/>
</dbReference>
<dbReference type="CDD" id="cd18116">
    <property type="entry name" value="ATP-synt_F1_alpha_N"/>
    <property type="match status" value="1"/>
</dbReference>
<dbReference type="CDD" id="cd01132">
    <property type="entry name" value="F1-ATPase_alpha_CD"/>
    <property type="match status" value="1"/>
</dbReference>
<dbReference type="FunFam" id="1.20.150.20:FF:000001">
    <property type="entry name" value="ATP synthase subunit alpha"/>
    <property type="match status" value="1"/>
</dbReference>
<dbReference type="FunFam" id="2.40.30.20:FF:000001">
    <property type="entry name" value="ATP synthase subunit alpha"/>
    <property type="match status" value="1"/>
</dbReference>
<dbReference type="FunFam" id="3.40.50.300:FF:000002">
    <property type="entry name" value="ATP synthase subunit alpha"/>
    <property type="match status" value="1"/>
</dbReference>
<dbReference type="Gene3D" id="2.40.30.20">
    <property type="match status" value="1"/>
</dbReference>
<dbReference type="Gene3D" id="1.20.150.20">
    <property type="entry name" value="ATP synthase alpha/beta chain, C-terminal domain"/>
    <property type="match status" value="1"/>
</dbReference>
<dbReference type="Gene3D" id="3.40.50.300">
    <property type="entry name" value="P-loop containing nucleotide triphosphate hydrolases"/>
    <property type="match status" value="1"/>
</dbReference>
<dbReference type="HAMAP" id="MF_01346">
    <property type="entry name" value="ATP_synth_alpha_bact"/>
    <property type="match status" value="1"/>
</dbReference>
<dbReference type="InterPro" id="IPR023366">
    <property type="entry name" value="ATP_synth_asu-like_sf"/>
</dbReference>
<dbReference type="InterPro" id="IPR000793">
    <property type="entry name" value="ATP_synth_asu_C"/>
</dbReference>
<dbReference type="InterPro" id="IPR038376">
    <property type="entry name" value="ATP_synth_asu_C_sf"/>
</dbReference>
<dbReference type="InterPro" id="IPR033732">
    <property type="entry name" value="ATP_synth_F1_a_nt-bd_dom"/>
</dbReference>
<dbReference type="InterPro" id="IPR005294">
    <property type="entry name" value="ATP_synth_F1_asu"/>
</dbReference>
<dbReference type="InterPro" id="IPR020003">
    <property type="entry name" value="ATPase_a/bsu_AS"/>
</dbReference>
<dbReference type="InterPro" id="IPR004100">
    <property type="entry name" value="ATPase_F1/V1/A1_a/bsu_N"/>
</dbReference>
<dbReference type="InterPro" id="IPR036121">
    <property type="entry name" value="ATPase_F1/V1/A1_a/bsu_N_sf"/>
</dbReference>
<dbReference type="InterPro" id="IPR000194">
    <property type="entry name" value="ATPase_F1/V1/A1_a/bsu_nucl-bd"/>
</dbReference>
<dbReference type="InterPro" id="IPR027417">
    <property type="entry name" value="P-loop_NTPase"/>
</dbReference>
<dbReference type="NCBIfam" id="TIGR00962">
    <property type="entry name" value="atpA"/>
    <property type="match status" value="1"/>
</dbReference>
<dbReference type="NCBIfam" id="NF009884">
    <property type="entry name" value="PRK13343.1"/>
    <property type="match status" value="1"/>
</dbReference>
<dbReference type="PANTHER" id="PTHR48082">
    <property type="entry name" value="ATP SYNTHASE SUBUNIT ALPHA, MITOCHONDRIAL"/>
    <property type="match status" value="1"/>
</dbReference>
<dbReference type="PANTHER" id="PTHR48082:SF2">
    <property type="entry name" value="ATP SYNTHASE SUBUNIT ALPHA, MITOCHONDRIAL"/>
    <property type="match status" value="1"/>
</dbReference>
<dbReference type="Pfam" id="PF00006">
    <property type="entry name" value="ATP-synt_ab"/>
    <property type="match status" value="1"/>
</dbReference>
<dbReference type="Pfam" id="PF00306">
    <property type="entry name" value="ATP-synt_ab_C"/>
    <property type="match status" value="1"/>
</dbReference>
<dbReference type="Pfam" id="PF02874">
    <property type="entry name" value="ATP-synt_ab_N"/>
    <property type="match status" value="1"/>
</dbReference>
<dbReference type="PIRSF" id="PIRSF039088">
    <property type="entry name" value="F_ATPase_subunit_alpha"/>
    <property type="match status" value="1"/>
</dbReference>
<dbReference type="SUPFAM" id="SSF47917">
    <property type="entry name" value="C-terminal domain of alpha and beta subunits of F1 ATP synthase"/>
    <property type="match status" value="1"/>
</dbReference>
<dbReference type="SUPFAM" id="SSF50615">
    <property type="entry name" value="N-terminal domain of alpha and beta subunits of F1 ATP synthase"/>
    <property type="match status" value="1"/>
</dbReference>
<dbReference type="SUPFAM" id="SSF52540">
    <property type="entry name" value="P-loop containing nucleoside triphosphate hydrolases"/>
    <property type="match status" value="1"/>
</dbReference>
<dbReference type="PROSITE" id="PS00152">
    <property type="entry name" value="ATPASE_ALPHA_BETA"/>
    <property type="match status" value="1"/>
</dbReference>
<name>ATPA_SILLA</name>
<evidence type="ECO:0000255" key="1">
    <source>
        <dbReference type="HAMAP-Rule" id="MF_01346"/>
    </source>
</evidence>
<gene>
    <name evidence="1" type="primary">atpA</name>
</gene>
<protein>
    <recommendedName>
        <fullName evidence="1">ATP synthase subunit alpha, chloroplastic</fullName>
        <ecNumber evidence="1">7.1.2.2</ecNumber>
    </recommendedName>
    <alternativeName>
        <fullName evidence="1">ATP synthase F1 sector subunit alpha</fullName>
    </alternativeName>
    <alternativeName>
        <fullName evidence="1">F-ATPase subunit alpha</fullName>
    </alternativeName>
</protein>
<proteinExistence type="inferred from homology"/>
<reference key="1">
    <citation type="submission" date="2004-08" db="EMBL/GenBank/DDBJ databases">
        <title>A partial chloroplast genome of Silene latifolia.</title>
        <authorList>
            <person name="Kejnovsky E."/>
            <person name="Kubat Z."/>
            <person name="Hobza R."/>
            <person name="Lengerova M."/>
            <person name="Sato S."/>
            <person name="Tabata S."/>
            <person name="Fukui K."/>
            <person name="Matsunaga S."/>
            <person name="Vyskot B."/>
        </authorList>
    </citation>
    <scope>NUCLEOTIDE SEQUENCE [GENOMIC DNA]</scope>
</reference>
<keyword id="KW-0066">ATP synthesis</keyword>
<keyword id="KW-0067">ATP-binding</keyword>
<keyword id="KW-0139">CF(1)</keyword>
<keyword id="KW-0150">Chloroplast</keyword>
<keyword id="KW-0375">Hydrogen ion transport</keyword>
<keyword id="KW-0406">Ion transport</keyword>
<keyword id="KW-0472">Membrane</keyword>
<keyword id="KW-0547">Nucleotide-binding</keyword>
<keyword id="KW-0934">Plastid</keyword>
<keyword id="KW-0793">Thylakoid</keyword>
<keyword id="KW-1278">Translocase</keyword>
<keyword id="KW-0813">Transport</keyword>
<accession>Q589B3</accession>
<comment type="function">
    <text evidence="1">Produces ATP from ADP in the presence of a proton gradient across the membrane. The alpha chain is a regulatory subunit.</text>
</comment>
<comment type="catalytic activity">
    <reaction evidence="1">
        <text>ATP + H2O + 4 H(+)(in) = ADP + phosphate + 5 H(+)(out)</text>
        <dbReference type="Rhea" id="RHEA:57720"/>
        <dbReference type="ChEBI" id="CHEBI:15377"/>
        <dbReference type="ChEBI" id="CHEBI:15378"/>
        <dbReference type="ChEBI" id="CHEBI:30616"/>
        <dbReference type="ChEBI" id="CHEBI:43474"/>
        <dbReference type="ChEBI" id="CHEBI:456216"/>
        <dbReference type="EC" id="7.1.2.2"/>
    </reaction>
</comment>
<comment type="subunit">
    <text evidence="1">F-type ATPases have 2 components, CF(1) - the catalytic core - and CF(0) - the membrane proton channel. CF(1) has five subunits: alpha(3), beta(3), gamma(1), delta(1), epsilon(1). CF(0) has four main subunits: a, b, b' and c.</text>
</comment>
<comment type="subcellular location">
    <subcellularLocation>
        <location evidence="1">Plastid</location>
        <location evidence="1">Chloroplast thylakoid membrane</location>
        <topology evidence="1">Peripheral membrane protein</topology>
    </subcellularLocation>
</comment>
<comment type="similarity">
    <text evidence="1">Belongs to the ATPase alpha/beta chains family.</text>
</comment>